<sequence length="225" mass="25561">MKKKRKGCFAAAGFMMIFVFVIASFLLVLLFFNRDLIKKLPIDTKTIVLERLTDYKPLVEEELESQGLSNYTSLILGMMYQESKGKGNDPMQSSESLGLKRNEITDPQLSVKQGIKQFTLMYKTGKEKGVDLDTIIQSYNMGAGYIDFVAEHGGTHTEELAKQYSEQQVKKNPDLYTCGGNAKNFRYPYCYGDYTYAEKVKEKTKTVEESLQVATLETMESKAHE</sequence>
<comment type="subcellular location">
    <subcellularLocation>
        <location evidence="2">Cell membrane</location>
        <topology evidence="2">Single-pass membrane protein</topology>
    </subcellularLocation>
</comment>
<gene>
    <name type="primary">yocA</name>
    <name type="ordered locus">BSU19130</name>
</gene>
<keyword id="KW-1003">Cell membrane</keyword>
<keyword id="KW-0472">Membrane</keyword>
<keyword id="KW-1185">Reference proteome</keyword>
<keyword id="KW-0812">Transmembrane</keyword>
<keyword id="KW-1133">Transmembrane helix</keyword>
<proteinExistence type="predicted"/>
<dbReference type="EMBL" id="AF027868">
    <property type="protein sequence ID" value="AAB84433.1"/>
    <property type="molecule type" value="Genomic_DNA"/>
</dbReference>
<dbReference type="EMBL" id="AL009126">
    <property type="protein sequence ID" value="CAB13805.1"/>
    <property type="molecule type" value="Genomic_DNA"/>
</dbReference>
<dbReference type="PIR" id="F69900">
    <property type="entry name" value="F69900"/>
</dbReference>
<dbReference type="RefSeq" id="NP_389794.1">
    <property type="nucleotide sequence ID" value="NC_000964.3"/>
</dbReference>
<dbReference type="RefSeq" id="WP_003231283.1">
    <property type="nucleotide sequence ID" value="NZ_OZ025638.1"/>
</dbReference>
<dbReference type="SMR" id="O34636"/>
<dbReference type="FunCoup" id="O34636">
    <property type="interactions" value="7"/>
</dbReference>
<dbReference type="STRING" id="224308.BSU19130"/>
<dbReference type="CAZy" id="GH23">
    <property type="family name" value="Glycoside Hydrolase Family 23"/>
</dbReference>
<dbReference type="PaxDb" id="224308-BSU19130"/>
<dbReference type="DNASU" id="939661"/>
<dbReference type="EnsemblBacteria" id="CAB13805">
    <property type="protein sequence ID" value="CAB13805"/>
    <property type="gene ID" value="BSU_19130"/>
</dbReference>
<dbReference type="GeneID" id="939661"/>
<dbReference type="KEGG" id="bsu:BSU19130"/>
<dbReference type="PATRIC" id="fig|224308.179.peg.2091"/>
<dbReference type="eggNOG" id="COG0741">
    <property type="taxonomic scope" value="Bacteria"/>
</dbReference>
<dbReference type="InParanoid" id="O34636"/>
<dbReference type="OrthoDB" id="9813368at2"/>
<dbReference type="PhylomeDB" id="O34636"/>
<dbReference type="BioCyc" id="BSUB:BSU19130-MONOMER"/>
<dbReference type="Proteomes" id="UP000001570">
    <property type="component" value="Chromosome"/>
</dbReference>
<dbReference type="GO" id="GO:0005886">
    <property type="term" value="C:plasma membrane"/>
    <property type="evidence" value="ECO:0007669"/>
    <property type="project" value="UniProtKB-SubCell"/>
</dbReference>
<dbReference type="GO" id="GO:0016052">
    <property type="term" value="P:carbohydrate catabolic process"/>
    <property type="evidence" value="ECO:0000318"/>
    <property type="project" value="GO_Central"/>
</dbReference>
<dbReference type="CDD" id="cd16891">
    <property type="entry name" value="CwlT-like"/>
    <property type="match status" value="1"/>
</dbReference>
<dbReference type="FunFam" id="1.10.530.10:FF:000013">
    <property type="entry name" value="Pneumococcal vaccine antigen A"/>
    <property type="match status" value="1"/>
</dbReference>
<dbReference type="Gene3D" id="1.10.530.10">
    <property type="match status" value="1"/>
</dbReference>
<dbReference type="InterPro" id="IPR047194">
    <property type="entry name" value="CwlT-like_lysozyme"/>
</dbReference>
<dbReference type="InterPro" id="IPR023346">
    <property type="entry name" value="Lysozyme-like_dom_sf"/>
</dbReference>
<dbReference type="PANTHER" id="PTHR34135">
    <property type="entry name" value="LYSOZYME"/>
    <property type="match status" value="1"/>
</dbReference>
<dbReference type="PANTHER" id="PTHR34135:SF3">
    <property type="entry name" value="PNEUMOCOCCAL VACCINE ANTIGEN A"/>
    <property type="match status" value="1"/>
</dbReference>
<dbReference type="Pfam" id="PF13702">
    <property type="entry name" value="Lysozyme_like"/>
    <property type="match status" value="1"/>
</dbReference>
<dbReference type="SUPFAM" id="SSF53955">
    <property type="entry name" value="Lysozyme-like"/>
    <property type="match status" value="1"/>
</dbReference>
<feature type="chain" id="PRO_0000379101" description="Uncharacterized membrane protein YocA">
    <location>
        <begin position="1"/>
        <end position="225"/>
    </location>
</feature>
<feature type="transmembrane region" description="Helical" evidence="1">
    <location>
        <begin position="12"/>
        <end position="32"/>
    </location>
</feature>
<evidence type="ECO:0000255" key="1"/>
<evidence type="ECO:0000305" key="2"/>
<organism>
    <name type="scientific">Bacillus subtilis (strain 168)</name>
    <dbReference type="NCBI Taxonomy" id="224308"/>
    <lineage>
        <taxon>Bacteria</taxon>
        <taxon>Bacillati</taxon>
        <taxon>Bacillota</taxon>
        <taxon>Bacilli</taxon>
        <taxon>Bacillales</taxon>
        <taxon>Bacillaceae</taxon>
        <taxon>Bacillus</taxon>
    </lineage>
</organism>
<reference key="1">
    <citation type="submission" date="1997-11" db="EMBL/GenBank/DDBJ databases">
        <title>Sequence analysis of the Bacillus subtilis chromosome region between the terC and odhAB loci cloned in a yeast artificial chromosome.</title>
        <authorList>
            <person name="Lapidus A."/>
            <person name="Galleron N."/>
            <person name="Sorokin A."/>
            <person name="Ehrlich S.D."/>
        </authorList>
    </citation>
    <scope>NUCLEOTIDE SEQUENCE [GENOMIC DNA]</scope>
</reference>
<reference key="2">
    <citation type="journal article" date="1997" name="Nature">
        <title>The complete genome sequence of the Gram-positive bacterium Bacillus subtilis.</title>
        <authorList>
            <person name="Kunst F."/>
            <person name="Ogasawara N."/>
            <person name="Moszer I."/>
            <person name="Albertini A.M."/>
            <person name="Alloni G."/>
            <person name="Azevedo V."/>
            <person name="Bertero M.G."/>
            <person name="Bessieres P."/>
            <person name="Bolotin A."/>
            <person name="Borchert S."/>
            <person name="Borriss R."/>
            <person name="Boursier L."/>
            <person name="Brans A."/>
            <person name="Braun M."/>
            <person name="Brignell S.C."/>
            <person name="Bron S."/>
            <person name="Brouillet S."/>
            <person name="Bruschi C.V."/>
            <person name="Caldwell B."/>
            <person name="Capuano V."/>
            <person name="Carter N.M."/>
            <person name="Choi S.-K."/>
            <person name="Codani J.-J."/>
            <person name="Connerton I.F."/>
            <person name="Cummings N.J."/>
            <person name="Daniel R.A."/>
            <person name="Denizot F."/>
            <person name="Devine K.M."/>
            <person name="Duesterhoeft A."/>
            <person name="Ehrlich S.D."/>
            <person name="Emmerson P.T."/>
            <person name="Entian K.-D."/>
            <person name="Errington J."/>
            <person name="Fabret C."/>
            <person name="Ferrari E."/>
            <person name="Foulger D."/>
            <person name="Fritz C."/>
            <person name="Fujita M."/>
            <person name="Fujita Y."/>
            <person name="Fuma S."/>
            <person name="Galizzi A."/>
            <person name="Galleron N."/>
            <person name="Ghim S.-Y."/>
            <person name="Glaser P."/>
            <person name="Goffeau A."/>
            <person name="Golightly E.J."/>
            <person name="Grandi G."/>
            <person name="Guiseppi G."/>
            <person name="Guy B.J."/>
            <person name="Haga K."/>
            <person name="Haiech J."/>
            <person name="Harwood C.R."/>
            <person name="Henaut A."/>
            <person name="Hilbert H."/>
            <person name="Holsappel S."/>
            <person name="Hosono S."/>
            <person name="Hullo M.-F."/>
            <person name="Itaya M."/>
            <person name="Jones L.-M."/>
            <person name="Joris B."/>
            <person name="Karamata D."/>
            <person name="Kasahara Y."/>
            <person name="Klaerr-Blanchard M."/>
            <person name="Klein C."/>
            <person name="Kobayashi Y."/>
            <person name="Koetter P."/>
            <person name="Koningstein G."/>
            <person name="Krogh S."/>
            <person name="Kumano M."/>
            <person name="Kurita K."/>
            <person name="Lapidus A."/>
            <person name="Lardinois S."/>
            <person name="Lauber J."/>
            <person name="Lazarevic V."/>
            <person name="Lee S.-M."/>
            <person name="Levine A."/>
            <person name="Liu H."/>
            <person name="Masuda S."/>
            <person name="Mauel C."/>
            <person name="Medigue C."/>
            <person name="Medina N."/>
            <person name="Mellado R.P."/>
            <person name="Mizuno M."/>
            <person name="Moestl D."/>
            <person name="Nakai S."/>
            <person name="Noback M."/>
            <person name="Noone D."/>
            <person name="O'Reilly M."/>
            <person name="Ogawa K."/>
            <person name="Ogiwara A."/>
            <person name="Oudega B."/>
            <person name="Park S.-H."/>
            <person name="Parro V."/>
            <person name="Pohl T.M."/>
            <person name="Portetelle D."/>
            <person name="Porwollik S."/>
            <person name="Prescott A.M."/>
            <person name="Presecan E."/>
            <person name="Pujic P."/>
            <person name="Purnelle B."/>
            <person name="Rapoport G."/>
            <person name="Rey M."/>
            <person name="Reynolds S."/>
            <person name="Rieger M."/>
            <person name="Rivolta C."/>
            <person name="Rocha E."/>
            <person name="Roche B."/>
            <person name="Rose M."/>
            <person name="Sadaie Y."/>
            <person name="Sato T."/>
            <person name="Scanlan E."/>
            <person name="Schleich S."/>
            <person name="Schroeter R."/>
            <person name="Scoffone F."/>
            <person name="Sekiguchi J."/>
            <person name="Sekowska A."/>
            <person name="Seror S.J."/>
            <person name="Serror P."/>
            <person name="Shin B.-S."/>
            <person name="Soldo B."/>
            <person name="Sorokin A."/>
            <person name="Tacconi E."/>
            <person name="Takagi T."/>
            <person name="Takahashi H."/>
            <person name="Takemaru K."/>
            <person name="Takeuchi M."/>
            <person name="Tamakoshi A."/>
            <person name="Tanaka T."/>
            <person name="Terpstra P."/>
            <person name="Tognoni A."/>
            <person name="Tosato V."/>
            <person name="Uchiyama S."/>
            <person name="Vandenbol M."/>
            <person name="Vannier F."/>
            <person name="Vassarotti A."/>
            <person name="Viari A."/>
            <person name="Wambutt R."/>
            <person name="Wedler E."/>
            <person name="Wedler H."/>
            <person name="Weitzenegger T."/>
            <person name="Winters P."/>
            <person name="Wipat A."/>
            <person name="Yamamoto H."/>
            <person name="Yamane K."/>
            <person name="Yasumoto K."/>
            <person name="Yata K."/>
            <person name="Yoshida K."/>
            <person name="Yoshikawa H.-F."/>
            <person name="Zumstein E."/>
            <person name="Yoshikawa H."/>
            <person name="Danchin A."/>
        </authorList>
    </citation>
    <scope>NUCLEOTIDE SEQUENCE [LARGE SCALE GENOMIC DNA]</scope>
    <source>
        <strain>168</strain>
    </source>
</reference>
<name>YOCA_BACSU</name>
<accession>O34636</accession>
<accession>Q796D2</accession>
<protein>
    <recommendedName>
        <fullName>Uncharacterized membrane protein YocA</fullName>
    </recommendedName>
</protein>